<organism>
    <name type="scientific">Arabidopsis thaliana</name>
    <name type="common">Mouse-ear cress</name>
    <dbReference type="NCBI Taxonomy" id="3702"/>
    <lineage>
        <taxon>Eukaryota</taxon>
        <taxon>Viridiplantae</taxon>
        <taxon>Streptophyta</taxon>
        <taxon>Embryophyta</taxon>
        <taxon>Tracheophyta</taxon>
        <taxon>Spermatophyta</taxon>
        <taxon>Magnoliopsida</taxon>
        <taxon>eudicotyledons</taxon>
        <taxon>Gunneridae</taxon>
        <taxon>Pentapetalae</taxon>
        <taxon>rosids</taxon>
        <taxon>malvids</taxon>
        <taxon>Brassicales</taxon>
        <taxon>Brassicaceae</taxon>
        <taxon>Camelineae</taxon>
        <taxon>Arabidopsis</taxon>
    </lineage>
</organism>
<evidence type="ECO:0000250" key="1"/>
<evidence type="ECO:0000255" key="2">
    <source>
        <dbReference type="PROSITE-ProRule" id="PRU00176"/>
    </source>
</evidence>
<evidence type="ECO:0000256" key="3">
    <source>
        <dbReference type="SAM" id="MobiDB-lite"/>
    </source>
</evidence>
<evidence type="ECO:0000269" key="4">
    <source>
    </source>
</evidence>
<evidence type="ECO:0000305" key="5"/>
<proteinExistence type="evidence at transcript level"/>
<protein>
    <recommendedName>
        <fullName>Probable glycine-rich RNA-binding protein 1</fullName>
        <shortName>AtGR-RBP1</shortName>
    </recommendedName>
    <alternativeName>
        <fullName>AtRBG1</fullName>
    </alternativeName>
</protein>
<reference key="1">
    <citation type="journal article" date="1999" name="Nature">
        <title>Sequence and analysis of chromosome 2 of the plant Arabidopsis thaliana.</title>
        <authorList>
            <person name="Lin X."/>
            <person name="Kaul S."/>
            <person name="Rounsley S.D."/>
            <person name="Shea T.P."/>
            <person name="Benito M.-I."/>
            <person name="Town C.D."/>
            <person name="Fujii C.Y."/>
            <person name="Mason T.M."/>
            <person name="Bowman C.L."/>
            <person name="Barnstead M.E."/>
            <person name="Feldblyum T.V."/>
            <person name="Buell C.R."/>
            <person name="Ketchum K.A."/>
            <person name="Lee J.J."/>
            <person name="Ronning C.M."/>
            <person name="Koo H.L."/>
            <person name="Moffat K.S."/>
            <person name="Cronin L.A."/>
            <person name="Shen M."/>
            <person name="Pai G."/>
            <person name="Van Aken S."/>
            <person name="Umayam L."/>
            <person name="Tallon L.J."/>
            <person name="Gill J.E."/>
            <person name="Adams M.D."/>
            <person name="Carrera A.J."/>
            <person name="Creasy T.H."/>
            <person name="Goodman H.M."/>
            <person name="Somerville C.R."/>
            <person name="Copenhaver G.P."/>
            <person name="Preuss D."/>
            <person name="Nierman W.C."/>
            <person name="White O."/>
            <person name="Eisen J.A."/>
            <person name="Salzberg S.L."/>
            <person name="Fraser C.M."/>
            <person name="Venter J.C."/>
        </authorList>
    </citation>
    <scope>NUCLEOTIDE SEQUENCE [LARGE SCALE GENOMIC DNA]</scope>
    <source>
        <strain>cv. Columbia</strain>
    </source>
</reference>
<reference key="2">
    <citation type="journal article" date="2017" name="Plant J.">
        <title>Araport11: a complete reannotation of the Arabidopsis thaliana reference genome.</title>
        <authorList>
            <person name="Cheng C.Y."/>
            <person name="Krishnakumar V."/>
            <person name="Chan A.P."/>
            <person name="Thibaud-Nissen F."/>
            <person name="Schobel S."/>
            <person name="Town C.D."/>
        </authorList>
    </citation>
    <scope>GENOME REANNOTATION</scope>
    <source>
        <strain>cv. Columbia</strain>
    </source>
</reference>
<reference key="3">
    <citation type="journal article" date="2002" name="Nucleic Acids Res.">
        <title>Genome analysis: RNA recognition motif (RRM) and K homology (KH) domain RNA-binding proteins from the flowering plant Arabidopsis thaliana.</title>
        <authorList>
            <person name="Lorkovic Z.J."/>
            <person name="Barta A."/>
        </authorList>
    </citation>
    <scope>GENE FAMILY</scope>
</reference>
<reference key="4">
    <citation type="journal article" date="2005" name="J. Exp. Bot.">
        <title>Characterization of transgenic Arabidopsis plants overexpressing GR-RBP4 under high salinity, dehydration, or cold stress.</title>
        <authorList>
            <person name="Kwak K.J."/>
            <person name="Kim Y.O."/>
            <person name="Kang H."/>
        </authorList>
    </citation>
    <scope>INDUCTION BY COLD; DEHYDRATION AND SALT</scope>
</reference>
<reference key="5">
    <citation type="journal article" date="2010" name="Plant Signal. Behav.">
        <title>Functional diversity of the plant glycine-rich proteins superfamily.</title>
        <authorList>
            <person name="Mangeon A."/>
            <person name="Junqueira R.M."/>
            <person name="Sachetto-Martins G."/>
        </authorList>
    </citation>
    <scope>NOMENCLATURE</scope>
</reference>
<sequence length="149" mass="16026">MAYADNEYRCFVGGLAWATDEQSIERCFNEFGEVFDSKIIIDRETGRSKGFRFVTFKDEDSMRTAIDRMNGQELDGRNITAQARGSGTRGGMVGGYGSGGYRGRRDQGGYNRGGGGGYGGGYGGDRREGGYGDGGYGGQGRSEGGSWRN</sequence>
<keyword id="KW-1185">Reference proteome</keyword>
<keyword id="KW-0694">RNA-binding</keyword>
<name>RBG1_ARATH</name>
<feature type="chain" id="PRO_0000421673" description="Probable glycine-rich RNA-binding protein 1">
    <location>
        <begin position="1"/>
        <end position="149"/>
    </location>
</feature>
<feature type="domain" description="RRM" evidence="2">
    <location>
        <begin position="8"/>
        <end position="83"/>
    </location>
</feature>
<feature type="region of interest" description="Disordered" evidence="3">
    <location>
        <begin position="80"/>
        <end position="149"/>
    </location>
</feature>
<feature type="compositionally biased region" description="Gly residues" evidence="3">
    <location>
        <begin position="87"/>
        <end position="101"/>
    </location>
</feature>
<feature type="compositionally biased region" description="Gly residues" evidence="3">
    <location>
        <begin position="110"/>
        <end position="123"/>
    </location>
</feature>
<feature type="compositionally biased region" description="Gly residues" evidence="3">
    <location>
        <begin position="131"/>
        <end position="143"/>
    </location>
</feature>
<feature type="sequence conflict" description="In Ref. 1; AAD22311." evidence="5" ref="1">
    <original>M</original>
    <variation>V</variation>
    <location>
        <position position="1"/>
    </location>
</feature>
<accession>Q9SIX3</accession>
<comment type="function">
    <text evidence="1">Possibly has a role in RNA transcription or processing during stress.</text>
</comment>
<comment type="induction">
    <text evidence="4">Up-regulated by cold stress, dehydration and salt stress.</text>
</comment>
<comment type="similarity">
    <text evidence="5">Belongs to the GR-RBP family.</text>
</comment>
<dbReference type="EMBL" id="AC007047">
    <property type="protein sequence ID" value="AAD22311.1"/>
    <property type="molecule type" value="Genomic_DNA"/>
</dbReference>
<dbReference type="EMBL" id="CP002685">
    <property type="status" value="NOT_ANNOTATED_CDS"/>
    <property type="molecule type" value="Genomic_DNA"/>
</dbReference>
<dbReference type="PIR" id="D84538">
    <property type="entry name" value="D84538"/>
</dbReference>
<dbReference type="SMR" id="Q9SIX3"/>
<dbReference type="FunCoup" id="Q9SIX3">
    <property type="interactions" value="2453"/>
</dbReference>
<dbReference type="STRING" id="3702.Q9SIX3"/>
<dbReference type="Araport" id="AT2G16260"/>
<dbReference type="TAIR" id="AT2G16260"/>
<dbReference type="InParanoid" id="Q9SIX3"/>
<dbReference type="PRO" id="PR:Q9SIX3"/>
<dbReference type="Proteomes" id="UP000006548">
    <property type="component" value="Chromosome 2"/>
</dbReference>
<dbReference type="ExpressionAtlas" id="Q9SIX3">
    <property type="expression patterns" value="baseline and differential"/>
</dbReference>
<dbReference type="GO" id="GO:0003729">
    <property type="term" value="F:mRNA binding"/>
    <property type="evidence" value="ECO:0000318"/>
    <property type="project" value="GO_Central"/>
</dbReference>
<dbReference type="GO" id="GO:1990428">
    <property type="term" value="P:miRNA transport"/>
    <property type="evidence" value="ECO:0000318"/>
    <property type="project" value="GO_Central"/>
</dbReference>
<dbReference type="GO" id="GO:0009409">
    <property type="term" value="P:response to cold"/>
    <property type="evidence" value="ECO:0000270"/>
    <property type="project" value="UniProtKB"/>
</dbReference>
<dbReference type="Gene3D" id="3.30.70.330">
    <property type="match status" value="1"/>
</dbReference>
<dbReference type="InterPro" id="IPR012677">
    <property type="entry name" value="Nucleotide-bd_a/b_plait_sf"/>
</dbReference>
<dbReference type="InterPro" id="IPR035979">
    <property type="entry name" value="RBD_domain_sf"/>
</dbReference>
<dbReference type="InterPro" id="IPR051106">
    <property type="entry name" value="RNA-bind/splicing_reg"/>
</dbReference>
<dbReference type="InterPro" id="IPR000504">
    <property type="entry name" value="RRM_dom"/>
</dbReference>
<dbReference type="PANTHER" id="PTHR48028">
    <property type="entry name" value="GLYCINE-RICH RNA-BINDING PROTEIN RZ1A"/>
    <property type="match status" value="1"/>
</dbReference>
<dbReference type="PANTHER" id="PTHR48028:SF2">
    <property type="entry name" value="GLYCINE-RICH RNA-BINDING PROTEIN RZ1A"/>
    <property type="match status" value="1"/>
</dbReference>
<dbReference type="Pfam" id="PF00076">
    <property type="entry name" value="RRM_1"/>
    <property type="match status" value="1"/>
</dbReference>
<dbReference type="SMART" id="SM00360">
    <property type="entry name" value="RRM"/>
    <property type="match status" value="1"/>
</dbReference>
<dbReference type="SUPFAM" id="SSF54928">
    <property type="entry name" value="RNA-binding domain, RBD"/>
    <property type="match status" value="1"/>
</dbReference>
<dbReference type="PROSITE" id="PS50102">
    <property type="entry name" value="RRM"/>
    <property type="match status" value="1"/>
</dbReference>
<gene>
    <name type="primary">RBG1</name>
    <name type="synonym">GR-RBP1</name>
    <name type="ordered locus">At2g16260</name>
    <name type="ORF">F16F14.24</name>
</gene>